<evidence type="ECO:0000250" key="1"/>
<evidence type="ECO:0000250" key="2">
    <source>
        <dbReference type="UniProtKB" id="P0CC17"/>
    </source>
</evidence>
<evidence type="ECO:0000250" key="3">
    <source>
        <dbReference type="UniProtKB" id="P81382"/>
    </source>
</evidence>
<evidence type="ECO:0000269" key="4">
    <source>
    </source>
</evidence>
<evidence type="ECO:0000269" key="5">
    <source ref="4"/>
</evidence>
<evidence type="ECO:0000303" key="6">
    <source>
    </source>
</evidence>
<evidence type="ECO:0000303" key="7">
    <source>
    </source>
</evidence>
<evidence type="ECO:0000303" key="8">
    <source ref="1"/>
</evidence>
<evidence type="ECO:0000305" key="9"/>
<evidence type="ECO:0000305" key="10">
    <source>
    </source>
</evidence>
<evidence type="ECO:0000312" key="11">
    <source>
        <dbReference type="EMBL" id="ABN72546.1"/>
    </source>
</evidence>
<evidence type="ECO:0000312" key="12">
    <source>
        <dbReference type="EMBL" id="AVX27607.1"/>
    </source>
</evidence>
<evidence type="ECO:0007744" key="13">
    <source>
        <dbReference type="PDB" id="5Z2G"/>
    </source>
</evidence>
<evidence type="ECO:0007829" key="14">
    <source>
        <dbReference type="PDB" id="5Z2G"/>
    </source>
</evidence>
<feature type="signal peptide" evidence="4">
    <location>
        <begin position="1"/>
        <end position="19"/>
    </location>
</feature>
<feature type="chain" id="PRO_0000412603" description="L-amino-acid oxidase">
    <location>
        <begin position="20"/>
        <end position="507" status="greater than"/>
    </location>
</feature>
<feature type="binding site" evidence="3 13">
    <location>
        <begin position="62"/>
        <end position="63"/>
    </location>
    <ligand>
        <name>FAD</name>
        <dbReference type="ChEBI" id="CHEBI:57692"/>
    </ligand>
</feature>
<feature type="binding site" evidence="3 13">
    <location>
        <begin position="82"/>
        <end position="83"/>
    </location>
    <ligand>
        <name>FAD</name>
        <dbReference type="ChEBI" id="CHEBI:57692"/>
    </ligand>
</feature>
<feature type="binding site" evidence="13">
    <location>
        <position position="90"/>
    </location>
    <ligand>
        <name>FAD</name>
        <dbReference type="ChEBI" id="CHEBI:57692"/>
    </ligand>
</feature>
<feature type="binding site" evidence="3 13">
    <location>
        <begin position="106"/>
        <end position="109"/>
    </location>
    <ligand>
        <name>FAD</name>
        <dbReference type="ChEBI" id="CHEBI:57692"/>
    </ligand>
</feature>
<feature type="binding site" evidence="1">
    <location>
        <position position="109"/>
    </location>
    <ligand>
        <name>substrate</name>
    </ligand>
</feature>
<feature type="binding site" evidence="13">
    <location>
        <position position="280"/>
    </location>
    <ligand>
        <name>FAD</name>
        <dbReference type="ChEBI" id="CHEBI:57692"/>
    </ligand>
</feature>
<feature type="binding site" evidence="1">
    <location>
        <position position="389"/>
    </location>
    <ligand>
        <name>substrate</name>
    </ligand>
</feature>
<feature type="binding site" evidence="13">
    <location>
        <position position="473"/>
    </location>
    <ligand>
        <name>FAD</name>
        <dbReference type="ChEBI" id="CHEBI:57692"/>
    </ligand>
</feature>
<feature type="binding site" evidence="3 13">
    <location>
        <begin position="480"/>
        <end position="485"/>
    </location>
    <ligand>
        <name>FAD</name>
        <dbReference type="ChEBI" id="CHEBI:57692"/>
    </ligand>
</feature>
<feature type="glycosylation site" description="N-linked (GlcNAc...) asparagine" evidence="13">
    <location>
        <position position="191"/>
    </location>
</feature>
<feature type="glycosylation site" description="N-linked (GlcNAc...) asparagine" evidence="13">
    <location>
        <position position="213"/>
    </location>
</feature>
<feature type="glycosylation site" description="N-linked (GlcNAc...) asparagine" evidence="13">
    <location>
        <position position="378"/>
    </location>
</feature>
<feature type="disulfide bond" evidence="13">
    <location>
        <begin position="29"/>
        <end position="192"/>
    </location>
</feature>
<feature type="disulfide bond" evidence="13">
    <location>
        <begin position="348"/>
        <end position="429"/>
    </location>
</feature>
<feature type="sequence conflict" description="In Ref. 2; ABN72546." evidence="9" ref="2">
    <original>KCFQEADYEDF</original>
    <variation>ECFQQNDYEEI</variation>
    <location>
        <begin position="28"/>
        <end position="38"/>
    </location>
</feature>
<feature type="sequence conflict" description="In Ref. 2; ABN72546." evidence="9" ref="2">
    <original>E</original>
    <variation>K</variation>
    <location>
        <position position="48"/>
    </location>
</feature>
<feature type="sequence conflict" description="In Ref. 2; ABN72546." evidence="9" ref="2">
    <original>S</original>
    <variation>P</variation>
    <location>
        <position position="179"/>
    </location>
</feature>
<feature type="non-terminal residue" evidence="8">
    <location>
        <position position="507"/>
    </location>
</feature>
<feature type="helix" evidence="14">
    <location>
        <begin position="27"/>
        <end position="30"/>
    </location>
</feature>
<feature type="helix" evidence="14">
    <location>
        <begin position="35"/>
        <end position="44"/>
    </location>
</feature>
<feature type="strand" evidence="14">
    <location>
        <begin position="54"/>
        <end position="58"/>
    </location>
</feature>
<feature type="helix" evidence="14">
    <location>
        <begin position="62"/>
        <end position="73"/>
    </location>
</feature>
<feature type="strand" evidence="14">
    <location>
        <begin position="77"/>
        <end position="81"/>
    </location>
</feature>
<feature type="strand" evidence="14">
    <location>
        <begin position="83"/>
        <end position="87"/>
    </location>
</feature>
<feature type="strand" evidence="14">
    <location>
        <begin position="93"/>
        <end position="96"/>
    </location>
</feature>
<feature type="turn" evidence="14">
    <location>
        <begin position="97"/>
        <end position="100"/>
    </location>
</feature>
<feature type="strand" evidence="14">
    <location>
        <begin position="101"/>
        <end position="106"/>
    </location>
</feature>
<feature type="helix" evidence="14">
    <location>
        <begin position="115"/>
        <end position="123"/>
    </location>
</feature>
<feature type="strand" evidence="14">
    <location>
        <begin position="128"/>
        <end position="131"/>
    </location>
</feature>
<feature type="strand" evidence="14">
    <location>
        <begin position="138"/>
        <end position="142"/>
    </location>
</feature>
<feature type="strand" evidence="14">
    <location>
        <begin position="145"/>
        <end position="148"/>
    </location>
</feature>
<feature type="helix" evidence="14">
    <location>
        <begin position="149"/>
        <end position="154"/>
    </location>
</feature>
<feature type="helix" evidence="14">
    <location>
        <begin position="156"/>
        <end position="159"/>
    </location>
</feature>
<feature type="helix" evidence="14">
    <location>
        <begin position="165"/>
        <end position="167"/>
    </location>
</feature>
<feature type="helix" evidence="14">
    <location>
        <begin position="172"/>
        <end position="178"/>
    </location>
</feature>
<feature type="helix" evidence="14">
    <location>
        <begin position="181"/>
        <end position="189"/>
    </location>
</feature>
<feature type="helix" evidence="14">
    <location>
        <begin position="192"/>
        <end position="199"/>
    </location>
</feature>
<feature type="helix" evidence="14">
    <location>
        <begin position="204"/>
        <end position="210"/>
    </location>
</feature>
<feature type="helix" evidence="14">
    <location>
        <begin position="216"/>
        <end position="225"/>
    </location>
</feature>
<feature type="helix" evidence="14">
    <location>
        <begin position="229"/>
        <end position="231"/>
    </location>
</feature>
<feature type="helix" evidence="14">
    <location>
        <begin position="236"/>
        <end position="246"/>
    </location>
</feature>
<feature type="strand" evidence="14">
    <location>
        <begin position="252"/>
        <end position="255"/>
    </location>
</feature>
<feature type="helix" evidence="14">
    <location>
        <begin position="261"/>
        <end position="269"/>
    </location>
</feature>
<feature type="helix" evidence="14">
    <location>
        <begin position="270"/>
        <end position="273"/>
    </location>
</feature>
<feature type="strand" evidence="14">
    <location>
        <begin position="274"/>
        <end position="277"/>
    </location>
</feature>
<feature type="strand" evidence="14">
    <location>
        <begin position="279"/>
        <end position="285"/>
    </location>
</feature>
<feature type="strand" evidence="14">
    <location>
        <begin position="290"/>
        <end position="309"/>
    </location>
</feature>
<feature type="helix" evidence="14">
    <location>
        <begin position="313"/>
        <end position="318"/>
    </location>
</feature>
<feature type="strand" evidence="14">
    <location>
        <begin position="319"/>
        <end position="323"/>
    </location>
</feature>
<feature type="helix" evidence="14">
    <location>
        <begin position="327"/>
        <end position="335"/>
    </location>
</feature>
<feature type="strand" evidence="14">
    <location>
        <begin position="341"/>
        <end position="350"/>
    </location>
</feature>
<feature type="helix" evidence="14">
    <location>
        <begin position="352"/>
        <end position="356"/>
    </location>
</feature>
<feature type="strand" evidence="14">
    <location>
        <begin position="360"/>
        <end position="367"/>
    </location>
</feature>
<feature type="strand" evidence="14">
    <location>
        <begin position="371"/>
        <end position="373"/>
    </location>
</feature>
<feature type="strand" evidence="14">
    <location>
        <begin position="384"/>
        <end position="391"/>
    </location>
</feature>
<feature type="helix" evidence="14">
    <location>
        <begin position="392"/>
        <end position="398"/>
    </location>
</feature>
<feature type="helix" evidence="14">
    <location>
        <begin position="403"/>
        <end position="417"/>
    </location>
</feature>
<feature type="helix" evidence="14">
    <location>
        <begin position="422"/>
        <end position="428"/>
    </location>
</feature>
<feature type="strand" evidence="14">
    <location>
        <begin position="429"/>
        <end position="435"/>
    </location>
</feature>
<feature type="helix" evidence="14">
    <location>
        <begin position="436"/>
        <end position="438"/>
    </location>
</feature>
<feature type="turn" evidence="14">
    <location>
        <begin position="440"/>
        <end position="442"/>
    </location>
</feature>
<feature type="strand" evidence="14">
    <location>
        <begin position="443"/>
        <end position="447"/>
    </location>
</feature>
<feature type="helix" evidence="14">
    <location>
        <begin position="453"/>
        <end position="462"/>
    </location>
</feature>
<feature type="strand" evidence="14">
    <location>
        <begin position="468"/>
        <end position="470"/>
    </location>
</feature>
<feature type="helix" evidence="14">
    <location>
        <begin position="473"/>
        <end position="475"/>
    </location>
</feature>
<feature type="strand" evidence="14">
    <location>
        <begin position="476"/>
        <end position="478"/>
    </location>
</feature>
<feature type="helix" evidence="14">
    <location>
        <begin position="482"/>
        <end position="499"/>
    </location>
</feature>
<proteinExistence type="evidence at protein level"/>
<protein>
    <recommendedName>
        <fullName evidence="6">L-amino-acid oxidase</fullName>
        <shortName>LAO</shortName>
        <shortName evidence="7">NA-LAAO</shortName>
        <ecNumber evidence="4">1.4.3.2</ecNumber>
    </recommendedName>
</protein>
<name>OXLA_NAJAT</name>
<reference evidence="12" key="1">
    <citation type="submission" date="2018-03" db="EMBL/GenBank/DDBJ databases">
        <title>Isolation and characterization of L-amino acid oxidase from Naja atra snake venom.</title>
        <authorList>
            <person name="Chiang L.C."/>
            <person name="Mao Y.C.-C."/>
            <person name="Wu W.G."/>
        </authorList>
    </citation>
    <scope>NUCLEOTIDE SEQUENCE [MRNA]</scope>
    <source>
        <tissue>Venom gland</tissue>
    </source>
</reference>
<reference evidence="11" key="2">
    <citation type="journal article" date="2007" name="Toxicon">
        <title>Molecular characterization of L-amino acid oxidase from king cobra venom.</title>
        <authorList>
            <person name="Jin Y."/>
            <person name="Lee W.-H."/>
            <person name="Zeng L."/>
            <person name="Zhang Y."/>
        </authorList>
    </citation>
    <scope>NUCLEOTIDE SEQUENCE [MRNA] OF 1-449</scope>
    <source>
        <tissue>Venom gland</tissue>
    </source>
</reference>
<reference key="3">
    <citation type="journal article" date="2008" name="Acta Biochim. Biophys. Sin.">
        <title>L-amino acid oxidase from Naja atra venom activates and binds to human platelets.</title>
        <authorList>
            <person name="Li R."/>
            <person name="Zhu S."/>
            <person name="Wu J."/>
            <person name="Wang W."/>
            <person name="Lu Q."/>
            <person name="Clemetson K.J."/>
        </authorList>
    </citation>
    <scope>PROTEIN SEQUENCE OF 20-29</scope>
    <scope>FUNCTION IN PLATELET AGGREGATION</scope>
    <scope>BIOPHYSICOCHEMICAL PROPERTIES</scope>
    <scope>SUBCELLULAR LOCATION</scope>
    <scope>CATALYTIC ACTIVITY</scope>
    <source>
        <tissue>Venom</tissue>
    </source>
</reference>
<reference evidence="13" key="4">
    <citation type="submission" date="2018-01" db="PDB data bank">
        <title>Crystal structure of L-amino acid oxidase from naja atra (Taiwan Cobra).</title>
        <authorList>
            <person name="Kumar J.V."/>
            <person name="Chien K.Y."/>
            <person name="Lin C.C."/>
            <person name="Chiang L.C."/>
            <person name="Lin T.H."/>
            <person name="Wu W.G."/>
        </authorList>
    </citation>
    <scope>X-RAY CRYSTALLOGRAPHY (2.68 ANGSTROMS) IN COMPLEX WITH FAD</scope>
    <scope>GLYCOSYLATION AT ASN-191; ASN-213 AND ASN-378</scope>
    <scope>DISULFIDE BONDS</scope>
    <scope>COFACTOR</scope>
    <scope>SUBUNIT</scope>
</reference>
<accession>A8QL58</accession>
<accession>A0A2R4N4Q6</accession>
<organism>
    <name type="scientific">Naja atra</name>
    <name type="common">Chinese cobra</name>
    <dbReference type="NCBI Taxonomy" id="8656"/>
    <lineage>
        <taxon>Eukaryota</taxon>
        <taxon>Metazoa</taxon>
        <taxon>Chordata</taxon>
        <taxon>Craniata</taxon>
        <taxon>Vertebrata</taxon>
        <taxon>Euteleostomi</taxon>
        <taxon>Lepidosauria</taxon>
        <taxon>Squamata</taxon>
        <taxon>Bifurcata</taxon>
        <taxon>Unidentata</taxon>
        <taxon>Episquamata</taxon>
        <taxon>Toxicofera</taxon>
        <taxon>Serpentes</taxon>
        <taxon>Colubroidea</taxon>
        <taxon>Elapidae</taxon>
        <taxon>Elapinae</taxon>
        <taxon>Naja</taxon>
    </lineage>
</organism>
<sequence>MNVLFIFSLLFLAALESCADDRRSPLEKCFQEADYEDFLEIARNGLKETSNPKHVVVVGAGMAGLSAAYVLAGAGHKVTLLEASERVGGRVITYHNDREGWYVNMGPMRLPERHRIVREYIRKFGLKLNEFFQENENAWYYINNIRKRVWEVKKDPSLLKYPVKPSEEGKSASQLYQESLRKVIEELKRTNCSYILNKYDSYSTKEYLIKEGNLSRGAVDMIGDLLNEDSSYHLSFMESLKSDALFSYEKRFDEIVGGFDQLPISMYQAIAEMVHLNARVIKIQYDAEKVRVTYQTPAKTFVTADYVIVCSTSRAARRIYFEPPLPPKKAHALRSIHYRSATKIFLTCSKKFWEADGIHGGKSTTDLPSRFIHYPNHNFTSGIGVIMAYVLADDSDFFQALDTKTCADIVINDLSLIHDLPKREIQALCYPSIKKWNLDKYTMGSITSFTPYQFQDYFESAAAPVGRIHFAGEYTGRFHGWIDSTIMTGLRAARDVNRASQKPSKIR</sequence>
<dbReference type="EC" id="1.4.3.2" evidence="4"/>
<dbReference type="EMBL" id="EF080839">
    <property type="protein sequence ID" value="ABN72546.1"/>
    <property type="molecule type" value="mRNA"/>
</dbReference>
<dbReference type="EMBL" id="MH023324">
    <property type="protein sequence ID" value="AVX27607.1"/>
    <property type="molecule type" value="mRNA"/>
</dbReference>
<dbReference type="PDB" id="5Z2G">
    <property type="method" value="X-ray"/>
    <property type="resolution" value="2.68 A"/>
    <property type="chains" value="A/B=1-507"/>
</dbReference>
<dbReference type="PDBsum" id="5Z2G"/>
<dbReference type="SMR" id="A8QL58"/>
<dbReference type="BRENDA" id="1.4.3.2">
    <property type="organism ID" value="3558"/>
</dbReference>
<dbReference type="GO" id="GO:0005576">
    <property type="term" value="C:extracellular region"/>
    <property type="evidence" value="ECO:0007669"/>
    <property type="project" value="UniProtKB-SubCell"/>
</dbReference>
<dbReference type="GO" id="GO:0001716">
    <property type="term" value="F:L-amino-acid oxidase activity"/>
    <property type="evidence" value="ECO:0007669"/>
    <property type="project" value="UniProtKB-EC"/>
</dbReference>
<dbReference type="GO" id="GO:0090729">
    <property type="term" value="F:toxin activity"/>
    <property type="evidence" value="ECO:0007669"/>
    <property type="project" value="UniProtKB-KW"/>
</dbReference>
<dbReference type="GO" id="GO:0009063">
    <property type="term" value="P:amino acid catabolic process"/>
    <property type="evidence" value="ECO:0007669"/>
    <property type="project" value="TreeGrafter"/>
</dbReference>
<dbReference type="GO" id="GO:0006915">
    <property type="term" value="P:apoptotic process"/>
    <property type="evidence" value="ECO:0007669"/>
    <property type="project" value="UniProtKB-KW"/>
</dbReference>
<dbReference type="GO" id="GO:0042742">
    <property type="term" value="P:defense response to bacterium"/>
    <property type="evidence" value="ECO:0007669"/>
    <property type="project" value="UniProtKB-KW"/>
</dbReference>
<dbReference type="GO" id="GO:0031640">
    <property type="term" value="P:killing of cells of another organism"/>
    <property type="evidence" value="ECO:0007669"/>
    <property type="project" value="UniProtKB-KW"/>
</dbReference>
<dbReference type="FunFam" id="1.10.405.10:FF:000004">
    <property type="entry name" value="Amine oxidase"/>
    <property type="match status" value="1"/>
</dbReference>
<dbReference type="FunFam" id="3.50.50.60:FF:000450">
    <property type="entry name" value="Amine oxidase"/>
    <property type="match status" value="1"/>
</dbReference>
<dbReference type="Gene3D" id="3.90.660.10">
    <property type="match status" value="1"/>
</dbReference>
<dbReference type="Gene3D" id="3.50.50.60">
    <property type="entry name" value="FAD/NAD(P)-binding domain"/>
    <property type="match status" value="1"/>
</dbReference>
<dbReference type="Gene3D" id="1.10.405.10">
    <property type="entry name" value="Guanine Nucleotide Dissociation Inhibitor, domain 1"/>
    <property type="match status" value="1"/>
</dbReference>
<dbReference type="InterPro" id="IPR002937">
    <property type="entry name" value="Amino_oxidase"/>
</dbReference>
<dbReference type="InterPro" id="IPR036188">
    <property type="entry name" value="FAD/NAD-bd_sf"/>
</dbReference>
<dbReference type="InterPro" id="IPR001613">
    <property type="entry name" value="Flavin_amine_oxidase"/>
</dbReference>
<dbReference type="InterPro" id="IPR050281">
    <property type="entry name" value="Flavin_monoamine_oxidase"/>
</dbReference>
<dbReference type="PANTHER" id="PTHR10742:SF355">
    <property type="entry name" value="AMINE OXIDASE"/>
    <property type="match status" value="1"/>
</dbReference>
<dbReference type="PANTHER" id="PTHR10742">
    <property type="entry name" value="FLAVIN MONOAMINE OXIDASE"/>
    <property type="match status" value="1"/>
</dbReference>
<dbReference type="Pfam" id="PF01593">
    <property type="entry name" value="Amino_oxidase"/>
    <property type="match status" value="1"/>
</dbReference>
<dbReference type="PRINTS" id="PR00757">
    <property type="entry name" value="AMINEOXDASEF"/>
</dbReference>
<dbReference type="SUPFAM" id="SSF54373">
    <property type="entry name" value="FAD-linked reductases, C-terminal domain"/>
    <property type="match status" value="1"/>
</dbReference>
<dbReference type="SUPFAM" id="SSF51905">
    <property type="entry name" value="FAD/NAD(P)-binding domain"/>
    <property type="match status" value="1"/>
</dbReference>
<keyword id="KW-0002">3D-structure</keyword>
<keyword id="KW-0044">Antibiotic</keyword>
<keyword id="KW-0929">Antimicrobial</keyword>
<keyword id="KW-0053">Apoptosis</keyword>
<keyword id="KW-0204">Cytolysis</keyword>
<keyword id="KW-0903">Direct protein sequencing</keyword>
<keyword id="KW-1015">Disulfide bond</keyword>
<keyword id="KW-0274">FAD</keyword>
<keyword id="KW-0285">Flavoprotein</keyword>
<keyword id="KW-0325">Glycoprotein</keyword>
<keyword id="KW-0354">Hemolysis</keyword>
<keyword id="KW-1199">Hemostasis impairing toxin</keyword>
<keyword id="KW-0560">Oxidoreductase</keyword>
<keyword id="KW-1202">Platelet aggregation activating toxin</keyword>
<keyword id="KW-0964">Secreted</keyword>
<keyword id="KW-0732">Signal</keyword>
<keyword id="KW-0800">Toxin</keyword>
<comment type="function">
    <text evidence="2 4">Catalyzes an oxidative deamination of predominantly hydrophobic and aromatic L-amino acids, thus producing hydrogen peroxide that may contribute to the diverse toxic effects of this enzyme (PubMed:18180850). Shows activity on L-Leu (PubMed:18180850). Exhibits diverse biological activities, such as hemorrhage, hemolysis, edema, apoptosis of vascular endothelial cells or tumor cell lines, antibacterial and antiparasitic activities (By similarity). This protein induces platelet aggregation by both hydrogen peroxide production and binding to platelet membrane proteins (that would enhance the sensitivity of platelets to hydrogen peroxide). Effects of snake L-amino oxidases on platelets are controversial, since they either induce aggregation or inhibit agonist-induced aggregation. These different effects are probably due to different experimental conditions.</text>
</comment>
<comment type="catalytic activity">
    <reaction evidence="4">
        <text>an L-alpha-amino acid + O2 + H2O = a 2-oxocarboxylate + H2O2 + NH4(+)</text>
        <dbReference type="Rhea" id="RHEA:13781"/>
        <dbReference type="ChEBI" id="CHEBI:15377"/>
        <dbReference type="ChEBI" id="CHEBI:15379"/>
        <dbReference type="ChEBI" id="CHEBI:16240"/>
        <dbReference type="ChEBI" id="CHEBI:28938"/>
        <dbReference type="ChEBI" id="CHEBI:35179"/>
        <dbReference type="ChEBI" id="CHEBI:59869"/>
        <dbReference type="EC" id="1.4.3.2"/>
    </reaction>
</comment>
<comment type="catalytic activity">
    <reaction evidence="4">
        <text>L-leucine + O2 + H2O = 4-methyl-2-oxopentanoate + H2O2 + NH4(+)</text>
        <dbReference type="Rhea" id="RHEA:60996"/>
        <dbReference type="ChEBI" id="CHEBI:15377"/>
        <dbReference type="ChEBI" id="CHEBI:15379"/>
        <dbReference type="ChEBI" id="CHEBI:16240"/>
        <dbReference type="ChEBI" id="CHEBI:17865"/>
        <dbReference type="ChEBI" id="CHEBI:28938"/>
        <dbReference type="ChEBI" id="CHEBI:57427"/>
    </reaction>
</comment>
<comment type="cofactor">
    <cofactor evidence="5">
        <name>FAD</name>
        <dbReference type="ChEBI" id="CHEBI:57692"/>
    </cofactor>
</comment>
<comment type="biophysicochemical properties">
    <kinetics>
        <Vmax evidence="4">38.4 umol/min/mg enzyme</Vmax>
    </kinetics>
</comment>
<comment type="subunit">
    <text evidence="5">Homodimer; non-covalently linked.</text>
</comment>
<comment type="subcellular location">
    <subcellularLocation>
        <location evidence="4">Secreted</location>
    </subcellularLocation>
</comment>
<comment type="tissue specificity">
    <text evidence="10">Expressed by the venom gland.</text>
</comment>
<comment type="similarity">
    <text evidence="9">Belongs to the flavin monoamine oxidase family. FIG1 subfamily.</text>
</comment>